<name>Y157_PASMU</name>
<dbReference type="EMBL" id="AE004439">
    <property type="protein sequence ID" value="AAK02241.1"/>
    <property type="molecule type" value="Genomic_DNA"/>
</dbReference>
<dbReference type="RefSeq" id="WP_010906508.1">
    <property type="nucleotide sequence ID" value="NC_002663.1"/>
</dbReference>
<dbReference type="STRING" id="272843.PM0157"/>
<dbReference type="EnsemblBacteria" id="AAK02241">
    <property type="protein sequence ID" value="AAK02241"/>
    <property type="gene ID" value="PM0157"/>
</dbReference>
<dbReference type="KEGG" id="pmu:PM0157"/>
<dbReference type="PATRIC" id="fig|272843.6.peg.162"/>
<dbReference type="HOGENOM" id="CLU_201562_0_0_6"/>
<dbReference type="OrthoDB" id="5681216at2"/>
<dbReference type="Proteomes" id="UP000000809">
    <property type="component" value="Chromosome"/>
</dbReference>
<dbReference type="InterPro" id="IPR008613">
    <property type="entry name" value="Excalibur_Ca-bd_domain"/>
</dbReference>
<dbReference type="Pfam" id="PF05901">
    <property type="entry name" value="Excalibur"/>
    <property type="match status" value="1"/>
</dbReference>
<dbReference type="SMART" id="SM00894">
    <property type="entry name" value="Excalibur"/>
    <property type="match status" value="1"/>
</dbReference>
<dbReference type="PROSITE" id="PS51257">
    <property type="entry name" value="PROKAR_LIPOPROTEIN"/>
    <property type="match status" value="1"/>
</dbReference>
<feature type="signal peptide" evidence="1">
    <location>
        <begin position="1"/>
        <end position="19"/>
    </location>
</feature>
<feature type="chain" id="PRO_0000014173" description="Uncharacterized protein PM0157">
    <location>
        <begin position="20"/>
        <end position="69"/>
    </location>
</feature>
<evidence type="ECO:0000255" key="1">
    <source>
        <dbReference type="PROSITE-ProRule" id="PRU00303"/>
    </source>
</evidence>
<keyword id="KW-1185">Reference proteome</keyword>
<keyword id="KW-0732">Signal</keyword>
<reference key="1">
    <citation type="journal article" date="2001" name="Proc. Natl. Acad. Sci. U.S.A.">
        <title>Complete genomic sequence of Pasteurella multocida Pm70.</title>
        <authorList>
            <person name="May B.J."/>
            <person name="Zhang Q."/>
            <person name="Li L.L."/>
            <person name="Paustian M.L."/>
            <person name="Whittam T.S."/>
            <person name="Kapur V."/>
        </authorList>
    </citation>
    <scope>NUCLEOTIDE SEQUENCE [LARGE SCALE GENOMIC DNA]</scope>
    <source>
        <strain>Pm70</strain>
    </source>
</reference>
<proteinExistence type="inferred from homology"/>
<protein>
    <recommendedName>
        <fullName>Uncharacterized protein PM0157</fullName>
    </recommendedName>
</protein>
<gene>
    <name type="ordered locus">PM0157</name>
</gene>
<accession>Q9CP96</accession>
<sequence>MKRIWVSLMIAITACSAHAKRVTCKHFATQAEAQAYMEKYKAYHLDGDHDGEACECLLGGSSHGLARCR</sequence>
<organism>
    <name type="scientific">Pasteurella multocida (strain Pm70)</name>
    <dbReference type="NCBI Taxonomy" id="272843"/>
    <lineage>
        <taxon>Bacteria</taxon>
        <taxon>Pseudomonadati</taxon>
        <taxon>Pseudomonadota</taxon>
        <taxon>Gammaproteobacteria</taxon>
        <taxon>Pasteurellales</taxon>
        <taxon>Pasteurellaceae</taxon>
        <taxon>Pasteurella</taxon>
    </lineage>
</organism>